<keyword id="KW-0028">Amino-acid biosynthesis</keyword>
<keyword id="KW-0963">Cytoplasm</keyword>
<keyword id="KW-0220">Diaminopimelate biosynthesis</keyword>
<keyword id="KW-0456">Lyase</keyword>
<keyword id="KW-0457">Lysine biosynthesis</keyword>
<keyword id="KW-0704">Schiff base</keyword>
<sequence length="292" mass="31170">MIAGSMVALVTPMDAQGRLDWGSLGKLVDFHLENGTHAIVAVGTTGESATLSVEEHIEVIEFVVKRVAGRIPVIAGTGANSTSEAVHLTQNAKDAGADACLLVVPYYNKPTQEGLYLHFKHIAEAVDIPQILYNVPGRTSCDMQAETVIRLSTVPNIIGIKEATGDLARAKAILDGVSKDFIVMSGDDPTAVELILLGGKGNISVTANVAPREMADLCEAALEGNAEKARAINEKLMPLHKDLFCEANPIPVKYALVEMGLMQKGIRLPLTWLSEGCHEKVRTALRQSGVLV</sequence>
<feature type="chain" id="PRO_1000124060" description="4-hydroxy-tetrahydrodipicolinate synthase">
    <location>
        <begin position="1"/>
        <end position="292"/>
    </location>
</feature>
<feature type="active site" description="Proton donor/acceptor" evidence="1">
    <location>
        <position position="133"/>
    </location>
</feature>
<feature type="active site" description="Schiff-base intermediate with substrate" evidence="1">
    <location>
        <position position="161"/>
    </location>
</feature>
<feature type="binding site" evidence="1">
    <location>
        <position position="45"/>
    </location>
    <ligand>
        <name>pyruvate</name>
        <dbReference type="ChEBI" id="CHEBI:15361"/>
    </ligand>
</feature>
<feature type="binding site" evidence="1">
    <location>
        <position position="203"/>
    </location>
    <ligand>
        <name>pyruvate</name>
        <dbReference type="ChEBI" id="CHEBI:15361"/>
    </ligand>
</feature>
<feature type="site" description="Part of a proton relay during catalysis" evidence="1">
    <location>
        <position position="44"/>
    </location>
</feature>
<feature type="site" description="Part of a proton relay during catalysis" evidence="1">
    <location>
        <position position="107"/>
    </location>
</feature>
<protein>
    <recommendedName>
        <fullName evidence="1">4-hydroxy-tetrahydrodipicolinate synthase</fullName>
        <shortName evidence="1">HTPA synthase</shortName>
        <ecNumber evidence="1">4.3.3.7</ecNumber>
    </recommendedName>
</protein>
<reference key="1">
    <citation type="submission" date="2008-02" db="EMBL/GenBank/DDBJ databases">
        <title>Complete sequence of Pseudomonas putida W619.</title>
        <authorList>
            <person name="Copeland A."/>
            <person name="Lucas S."/>
            <person name="Lapidus A."/>
            <person name="Barry K."/>
            <person name="Detter J.C."/>
            <person name="Glavina del Rio T."/>
            <person name="Dalin E."/>
            <person name="Tice H."/>
            <person name="Pitluck S."/>
            <person name="Chain P."/>
            <person name="Malfatti S."/>
            <person name="Shin M."/>
            <person name="Vergez L."/>
            <person name="Schmutz J."/>
            <person name="Larimer F."/>
            <person name="Land M."/>
            <person name="Hauser L."/>
            <person name="Kyrpides N."/>
            <person name="Kim E."/>
            <person name="Taghavi S."/>
            <person name="Vangronsveld D."/>
            <person name="van der Lelie D."/>
            <person name="Richardson P."/>
        </authorList>
    </citation>
    <scope>NUCLEOTIDE SEQUENCE [LARGE SCALE GENOMIC DNA]</scope>
    <source>
        <strain>W619</strain>
    </source>
</reference>
<gene>
    <name evidence="1" type="primary">dapA</name>
    <name type="ordered locus">PputW619_3975</name>
</gene>
<accession>B1JDB7</accession>
<dbReference type="EC" id="4.3.3.7" evidence="1"/>
<dbReference type="EMBL" id="CP000949">
    <property type="protein sequence ID" value="ACA74455.1"/>
    <property type="molecule type" value="Genomic_DNA"/>
</dbReference>
<dbReference type="SMR" id="B1JDB7"/>
<dbReference type="STRING" id="390235.PputW619_3975"/>
<dbReference type="KEGG" id="ppw:PputW619_3975"/>
<dbReference type="eggNOG" id="COG0329">
    <property type="taxonomic scope" value="Bacteria"/>
</dbReference>
<dbReference type="HOGENOM" id="CLU_049343_7_1_6"/>
<dbReference type="OrthoDB" id="9782828at2"/>
<dbReference type="UniPathway" id="UPA00034">
    <property type="reaction ID" value="UER00017"/>
</dbReference>
<dbReference type="GO" id="GO:0005829">
    <property type="term" value="C:cytosol"/>
    <property type="evidence" value="ECO:0007669"/>
    <property type="project" value="TreeGrafter"/>
</dbReference>
<dbReference type="GO" id="GO:0008840">
    <property type="term" value="F:4-hydroxy-tetrahydrodipicolinate synthase activity"/>
    <property type="evidence" value="ECO:0007669"/>
    <property type="project" value="UniProtKB-UniRule"/>
</dbReference>
<dbReference type="GO" id="GO:0019877">
    <property type="term" value="P:diaminopimelate biosynthetic process"/>
    <property type="evidence" value="ECO:0007669"/>
    <property type="project" value="UniProtKB-UniRule"/>
</dbReference>
<dbReference type="GO" id="GO:0009089">
    <property type="term" value="P:lysine biosynthetic process via diaminopimelate"/>
    <property type="evidence" value="ECO:0007669"/>
    <property type="project" value="UniProtKB-UniRule"/>
</dbReference>
<dbReference type="CDD" id="cd00950">
    <property type="entry name" value="DHDPS"/>
    <property type="match status" value="1"/>
</dbReference>
<dbReference type="Gene3D" id="3.20.20.70">
    <property type="entry name" value="Aldolase class I"/>
    <property type="match status" value="1"/>
</dbReference>
<dbReference type="HAMAP" id="MF_00418">
    <property type="entry name" value="DapA"/>
    <property type="match status" value="1"/>
</dbReference>
<dbReference type="InterPro" id="IPR013785">
    <property type="entry name" value="Aldolase_TIM"/>
</dbReference>
<dbReference type="InterPro" id="IPR005263">
    <property type="entry name" value="DapA"/>
</dbReference>
<dbReference type="InterPro" id="IPR002220">
    <property type="entry name" value="DapA-like"/>
</dbReference>
<dbReference type="InterPro" id="IPR020625">
    <property type="entry name" value="Schiff_base-form_aldolases_AS"/>
</dbReference>
<dbReference type="InterPro" id="IPR020624">
    <property type="entry name" value="Schiff_base-form_aldolases_CS"/>
</dbReference>
<dbReference type="NCBIfam" id="TIGR00674">
    <property type="entry name" value="dapA"/>
    <property type="match status" value="1"/>
</dbReference>
<dbReference type="PANTHER" id="PTHR12128:SF66">
    <property type="entry name" value="4-HYDROXY-2-OXOGLUTARATE ALDOLASE, MITOCHONDRIAL"/>
    <property type="match status" value="1"/>
</dbReference>
<dbReference type="PANTHER" id="PTHR12128">
    <property type="entry name" value="DIHYDRODIPICOLINATE SYNTHASE"/>
    <property type="match status" value="1"/>
</dbReference>
<dbReference type="Pfam" id="PF00701">
    <property type="entry name" value="DHDPS"/>
    <property type="match status" value="1"/>
</dbReference>
<dbReference type="PIRSF" id="PIRSF001365">
    <property type="entry name" value="DHDPS"/>
    <property type="match status" value="1"/>
</dbReference>
<dbReference type="PRINTS" id="PR00146">
    <property type="entry name" value="DHPICSNTHASE"/>
</dbReference>
<dbReference type="SMART" id="SM01130">
    <property type="entry name" value="DHDPS"/>
    <property type="match status" value="1"/>
</dbReference>
<dbReference type="SUPFAM" id="SSF51569">
    <property type="entry name" value="Aldolase"/>
    <property type="match status" value="1"/>
</dbReference>
<dbReference type="PROSITE" id="PS00665">
    <property type="entry name" value="DHDPS_1"/>
    <property type="match status" value="1"/>
</dbReference>
<dbReference type="PROSITE" id="PS00666">
    <property type="entry name" value="DHDPS_2"/>
    <property type="match status" value="1"/>
</dbReference>
<proteinExistence type="inferred from homology"/>
<organism>
    <name type="scientific">Pseudomonas putida (strain W619)</name>
    <dbReference type="NCBI Taxonomy" id="390235"/>
    <lineage>
        <taxon>Bacteria</taxon>
        <taxon>Pseudomonadati</taxon>
        <taxon>Pseudomonadota</taxon>
        <taxon>Gammaproteobacteria</taxon>
        <taxon>Pseudomonadales</taxon>
        <taxon>Pseudomonadaceae</taxon>
        <taxon>Pseudomonas</taxon>
    </lineage>
</organism>
<evidence type="ECO:0000255" key="1">
    <source>
        <dbReference type="HAMAP-Rule" id="MF_00418"/>
    </source>
</evidence>
<evidence type="ECO:0000305" key="2"/>
<comment type="function">
    <text evidence="1">Catalyzes the condensation of (S)-aspartate-beta-semialdehyde [(S)-ASA] and pyruvate to 4-hydroxy-tetrahydrodipicolinate (HTPA).</text>
</comment>
<comment type="catalytic activity">
    <reaction evidence="1">
        <text>L-aspartate 4-semialdehyde + pyruvate = (2S,4S)-4-hydroxy-2,3,4,5-tetrahydrodipicolinate + H2O + H(+)</text>
        <dbReference type="Rhea" id="RHEA:34171"/>
        <dbReference type="ChEBI" id="CHEBI:15361"/>
        <dbReference type="ChEBI" id="CHEBI:15377"/>
        <dbReference type="ChEBI" id="CHEBI:15378"/>
        <dbReference type="ChEBI" id="CHEBI:67139"/>
        <dbReference type="ChEBI" id="CHEBI:537519"/>
        <dbReference type="EC" id="4.3.3.7"/>
    </reaction>
</comment>
<comment type="pathway">
    <text evidence="1">Amino-acid biosynthesis; L-lysine biosynthesis via DAP pathway; (S)-tetrahydrodipicolinate from L-aspartate: step 3/4.</text>
</comment>
<comment type="subunit">
    <text evidence="1">Homodimer.</text>
</comment>
<comment type="subcellular location">
    <subcellularLocation>
        <location evidence="1">Cytoplasm</location>
    </subcellularLocation>
</comment>
<comment type="similarity">
    <text evidence="1">Belongs to the DapA family.</text>
</comment>
<comment type="caution">
    <text evidence="2">Was originally thought to be a dihydrodipicolinate synthase (DHDPS), catalyzing the condensation of (S)-aspartate-beta-semialdehyde [(S)-ASA] and pyruvate to dihydrodipicolinate (DHDP). However, it was shown in E.coli that the product of the enzymatic reaction is not dihydrodipicolinate but in fact (4S)-4-hydroxy-2,3,4,5-tetrahydro-(2S)-dipicolinic acid (HTPA), and that the consecutive dehydration reaction leading to DHDP is not spontaneous but catalyzed by DapB.</text>
</comment>
<name>DAPA_PSEPW</name>